<dbReference type="EMBL" id="CU329670">
    <property type="protein sequence ID" value="CAB11047.1"/>
    <property type="molecule type" value="Genomic_DNA"/>
</dbReference>
<dbReference type="PIR" id="T37786">
    <property type="entry name" value="T37786"/>
</dbReference>
<dbReference type="RefSeq" id="NP_594218.1">
    <property type="nucleotide sequence ID" value="NM_001019641.2"/>
</dbReference>
<dbReference type="SMR" id="O13741"/>
<dbReference type="BioGRID" id="278780">
    <property type="interactions" value="14"/>
</dbReference>
<dbReference type="FunCoup" id="O13741">
    <property type="interactions" value="373"/>
</dbReference>
<dbReference type="STRING" id="284812.O13741"/>
<dbReference type="iPTMnet" id="O13741"/>
<dbReference type="PaxDb" id="4896-SPAC16E8.06c.1"/>
<dbReference type="EnsemblFungi" id="SPAC16E8.06c.1">
    <property type="protein sequence ID" value="SPAC16E8.06c.1:pep"/>
    <property type="gene ID" value="SPAC16E8.06c"/>
</dbReference>
<dbReference type="GeneID" id="2542314"/>
<dbReference type="KEGG" id="spo:2542314"/>
<dbReference type="PomBase" id="SPAC16E8.06c">
    <property type="gene designation" value="nop12"/>
</dbReference>
<dbReference type="VEuPathDB" id="FungiDB:SPAC16E8.06c"/>
<dbReference type="eggNOG" id="KOG0118">
    <property type="taxonomic scope" value="Eukaryota"/>
</dbReference>
<dbReference type="HOGENOM" id="CLU_006468_2_0_1"/>
<dbReference type="InParanoid" id="O13741"/>
<dbReference type="OMA" id="NAYAVYT"/>
<dbReference type="PhylomeDB" id="O13741"/>
<dbReference type="PRO" id="PR:O13741"/>
<dbReference type="Proteomes" id="UP000002485">
    <property type="component" value="Chromosome I"/>
</dbReference>
<dbReference type="GO" id="GO:0005730">
    <property type="term" value="C:nucleolus"/>
    <property type="evidence" value="ECO:0007005"/>
    <property type="project" value="PomBase"/>
</dbReference>
<dbReference type="GO" id="GO:0003723">
    <property type="term" value="F:RNA binding"/>
    <property type="evidence" value="ECO:0000318"/>
    <property type="project" value="GO_Central"/>
</dbReference>
<dbReference type="GO" id="GO:0000463">
    <property type="term" value="P:maturation of LSU-rRNA from tricistronic rRNA transcript (SSU-rRNA, 5.8S rRNA, LSU-rRNA)"/>
    <property type="evidence" value="ECO:0000318"/>
    <property type="project" value="GO_Central"/>
</dbReference>
<dbReference type="CDD" id="cd12669">
    <property type="entry name" value="RRM1_Nop12p_like"/>
    <property type="match status" value="1"/>
</dbReference>
<dbReference type="CDD" id="cd12670">
    <property type="entry name" value="RRM2_Nop12p_like"/>
    <property type="match status" value="1"/>
</dbReference>
<dbReference type="Gene3D" id="3.30.70.330">
    <property type="match status" value="2"/>
</dbReference>
<dbReference type="InterPro" id="IPR034777">
    <property type="entry name" value="Nop12_RRM1"/>
</dbReference>
<dbReference type="InterPro" id="IPR012677">
    <property type="entry name" value="Nucleotide-bd_a/b_plait_sf"/>
</dbReference>
<dbReference type="InterPro" id="IPR035979">
    <property type="entry name" value="RBD_domain_sf"/>
</dbReference>
<dbReference type="InterPro" id="IPR047189">
    <property type="entry name" value="RRM2_Nop12p-like"/>
</dbReference>
<dbReference type="InterPro" id="IPR000504">
    <property type="entry name" value="RRM_dom"/>
</dbReference>
<dbReference type="PANTHER" id="PTHR23236">
    <property type="entry name" value="EUKARYOTIC TRANSLATION INITIATION FACTOR 4B/4H"/>
    <property type="match status" value="1"/>
</dbReference>
<dbReference type="PANTHER" id="PTHR23236:SF25">
    <property type="entry name" value="RNA-BINDING PROTEIN 34"/>
    <property type="match status" value="1"/>
</dbReference>
<dbReference type="Pfam" id="PF00076">
    <property type="entry name" value="RRM_1"/>
    <property type="match status" value="1"/>
</dbReference>
<dbReference type="SMART" id="SM00360">
    <property type="entry name" value="RRM"/>
    <property type="match status" value="2"/>
</dbReference>
<dbReference type="SUPFAM" id="SSF54928">
    <property type="entry name" value="RNA-binding domain, RBD"/>
    <property type="match status" value="2"/>
</dbReference>
<dbReference type="PROSITE" id="PS50102">
    <property type="entry name" value="RRM"/>
    <property type="match status" value="2"/>
</dbReference>
<protein>
    <recommendedName>
        <fullName>Nucleolar protein 12</fullName>
    </recommendedName>
</protein>
<comment type="function">
    <text evidence="1">Involved in pre-25S rRNA processing.</text>
</comment>
<comment type="subcellular location">
    <subcellularLocation>
        <location evidence="1">Nucleus</location>
        <location evidence="1">Nucleolus</location>
    </subcellularLocation>
</comment>
<comment type="similarity">
    <text evidence="5">Belongs to the RRM RBM34 family.</text>
</comment>
<feature type="chain" id="PRO_0000081673" description="Nucleolar protein 12">
    <location>
        <begin position="1"/>
        <end position="438"/>
    </location>
</feature>
<feature type="domain" description="RRM 1" evidence="2">
    <location>
        <begin position="164"/>
        <end position="262"/>
    </location>
</feature>
<feature type="domain" description="RRM 2" evidence="2">
    <location>
        <begin position="270"/>
        <end position="348"/>
    </location>
</feature>
<feature type="region of interest" description="Disordered" evidence="3">
    <location>
        <begin position="1"/>
        <end position="28"/>
    </location>
</feature>
<feature type="region of interest" description="Disordered" evidence="3">
    <location>
        <begin position="60"/>
        <end position="94"/>
    </location>
</feature>
<feature type="region of interest" description="Disordered" evidence="3">
    <location>
        <begin position="108"/>
        <end position="146"/>
    </location>
</feature>
<feature type="region of interest" description="Disordered" evidence="3">
    <location>
        <begin position="346"/>
        <end position="366"/>
    </location>
</feature>
<feature type="region of interest" description="Disordered" evidence="3">
    <location>
        <begin position="390"/>
        <end position="438"/>
    </location>
</feature>
<feature type="compositionally biased region" description="Acidic residues" evidence="3">
    <location>
        <begin position="60"/>
        <end position="71"/>
    </location>
</feature>
<feature type="compositionally biased region" description="Basic and acidic residues" evidence="3">
    <location>
        <begin position="135"/>
        <end position="146"/>
    </location>
</feature>
<feature type="compositionally biased region" description="Basic residues" evidence="3">
    <location>
        <begin position="346"/>
        <end position="357"/>
    </location>
</feature>
<feature type="compositionally biased region" description="Basic residues" evidence="3">
    <location>
        <begin position="402"/>
        <end position="412"/>
    </location>
</feature>
<feature type="modified residue" description="Phosphoserine" evidence="4">
    <location>
        <position position="94"/>
    </location>
</feature>
<feature type="modified residue" description="Phosphoserine" evidence="4">
    <location>
        <position position="95"/>
    </location>
</feature>
<name>NOP12_SCHPO</name>
<evidence type="ECO:0000250" key="1"/>
<evidence type="ECO:0000255" key="2">
    <source>
        <dbReference type="PROSITE-ProRule" id="PRU00176"/>
    </source>
</evidence>
<evidence type="ECO:0000256" key="3">
    <source>
        <dbReference type="SAM" id="MobiDB-lite"/>
    </source>
</evidence>
<evidence type="ECO:0000269" key="4">
    <source>
    </source>
</evidence>
<evidence type="ECO:0000305" key="5"/>
<proteinExistence type="evidence at protein level"/>
<organism>
    <name type="scientific">Schizosaccharomyces pombe (strain 972 / ATCC 24843)</name>
    <name type="common">Fission yeast</name>
    <dbReference type="NCBI Taxonomy" id="284812"/>
    <lineage>
        <taxon>Eukaryota</taxon>
        <taxon>Fungi</taxon>
        <taxon>Dikarya</taxon>
        <taxon>Ascomycota</taxon>
        <taxon>Taphrinomycotina</taxon>
        <taxon>Schizosaccharomycetes</taxon>
        <taxon>Schizosaccharomycetales</taxon>
        <taxon>Schizosaccharomycetaceae</taxon>
        <taxon>Schizosaccharomyces</taxon>
    </lineage>
</organism>
<gene>
    <name type="primary">nop12</name>
    <name type="ORF">SPAC16E8.06c</name>
</gene>
<accession>O13741</accession>
<sequence length="438" mass="49381">MGETNSSLDNENTSFVGKLSSSSNVDPTLNLLFSQSKPIPKPVAKETTVLTKKDVEVEEANGVEEAAETIESDTKEVQNIKPKSKKKKKKLNDSSDDIEGKYFEELLAEEDEEKDKDSAGLINDEEDKSPAKQSVLEERTSQEDVKSEREVAEKLANELEKSDKTVFVNNLPARVVTNKGDYKDLTKHFRQFGAVDSIRFRSLAFSEAIPRKVAFFEKKFHSERDTVNAYIVFRDSSSARSALSLNGTMFMDRHLRVDSVSHPMPQDTKRCVFVGNLAFEAEEEPLWRYFGDCGSIDYVRIVRDPKTNLGKGFAYIQFKDTMGVDKALLLNEKKMPEGRTLRIMRAKSTKPKSITRSKRGDEKTRTLQGRARKLIGKAGNALLQQELALEGHRAKPGENPLAKKKVNKKRKERAAQWRNKKAESVGKKQKTAAGKKDK</sequence>
<reference key="1">
    <citation type="journal article" date="2002" name="Nature">
        <title>The genome sequence of Schizosaccharomyces pombe.</title>
        <authorList>
            <person name="Wood V."/>
            <person name="Gwilliam R."/>
            <person name="Rajandream M.A."/>
            <person name="Lyne M.H."/>
            <person name="Lyne R."/>
            <person name="Stewart A."/>
            <person name="Sgouros J.G."/>
            <person name="Peat N."/>
            <person name="Hayles J."/>
            <person name="Baker S.G."/>
            <person name="Basham D."/>
            <person name="Bowman S."/>
            <person name="Brooks K."/>
            <person name="Brown D."/>
            <person name="Brown S."/>
            <person name="Chillingworth T."/>
            <person name="Churcher C.M."/>
            <person name="Collins M."/>
            <person name="Connor R."/>
            <person name="Cronin A."/>
            <person name="Davis P."/>
            <person name="Feltwell T."/>
            <person name="Fraser A."/>
            <person name="Gentles S."/>
            <person name="Goble A."/>
            <person name="Hamlin N."/>
            <person name="Harris D.E."/>
            <person name="Hidalgo J."/>
            <person name="Hodgson G."/>
            <person name="Holroyd S."/>
            <person name="Hornsby T."/>
            <person name="Howarth S."/>
            <person name="Huckle E.J."/>
            <person name="Hunt S."/>
            <person name="Jagels K."/>
            <person name="James K.D."/>
            <person name="Jones L."/>
            <person name="Jones M."/>
            <person name="Leather S."/>
            <person name="McDonald S."/>
            <person name="McLean J."/>
            <person name="Mooney P."/>
            <person name="Moule S."/>
            <person name="Mungall K.L."/>
            <person name="Murphy L.D."/>
            <person name="Niblett D."/>
            <person name="Odell C."/>
            <person name="Oliver K."/>
            <person name="O'Neil S."/>
            <person name="Pearson D."/>
            <person name="Quail M.A."/>
            <person name="Rabbinowitsch E."/>
            <person name="Rutherford K.M."/>
            <person name="Rutter S."/>
            <person name="Saunders D."/>
            <person name="Seeger K."/>
            <person name="Sharp S."/>
            <person name="Skelton J."/>
            <person name="Simmonds M.N."/>
            <person name="Squares R."/>
            <person name="Squares S."/>
            <person name="Stevens K."/>
            <person name="Taylor K."/>
            <person name="Taylor R.G."/>
            <person name="Tivey A."/>
            <person name="Walsh S.V."/>
            <person name="Warren T."/>
            <person name="Whitehead S."/>
            <person name="Woodward J.R."/>
            <person name="Volckaert G."/>
            <person name="Aert R."/>
            <person name="Robben J."/>
            <person name="Grymonprez B."/>
            <person name="Weltjens I."/>
            <person name="Vanstreels E."/>
            <person name="Rieger M."/>
            <person name="Schaefer M."/>
            <person name="Mueller-Auer S."/>
            <person name="Gabel C."/>
            <person name="Fuchs M."/>
            <person name="Duesterhoeft A."/>
            <person name="Fritzc C."/>
            <person name="Holzer E."/>
            <person name="Moestl D."/>
            <person name="Hilbert H."/>
            <person name="Borzym K."/>
            <person name="Langer I."/>
            <person name="Beck A."/>
            <person name="Lehrach H."/>
            <person name="Reinhardt R."/>
            <person name="Pohl T.M."/>
            <person name="Eger P."/>
            <person name="Zimmermann W."/>
            <person name="Wedler H."/>
            <person name="Wambutt R."/>
            <person name="Purnelle B."/>
            <person name="Goffeau A."/>
            <person name="Cadieu E."/>
            <person name="Dreano S."/>
            <person name="Gloux S."/>
            <person name="Lelaure V."/>
            <person name="Mottier S."/>
            <person name="Galibert F."/>
            <person name="Aves S.J."/>
            <person name="Xiang Z."/>
            <person name="Hunt C."/>
            <person name="Moore K."/>
            <person name="Hurst S.M."/>
            <person name="Lucas M."/>
            <person name="Rochet M."/>
            <person name="Gaillardin C."/>
            <person name="Tallada V.A."/>
            <person name="Garzon A."/>
            <person name="Thode G."/>
            <person name="Daga R.R."/>
            <person name="Cruzado L."/>
            <person name="Jimenez J."/>
            <person name="Sanchez M."/>
            <person name="del Rey F."/>
            <person name="Benito J."/>
            <person name="Dominguez A."/>
            <person name="Revuelta J.L."/>
            <person name="Moreno S."/>
            <person name="Armstrong J."/>
            <person name="Forsburg S.L."/>
            <person name="Cerutti L."/>
            <person name="Lowe T."/>
            <person name="McCombie W.R."/>
            <person name="Paulsen I."/>
            <person name="Potashkin J."/>
            <person name="Shpakovski G.V."/>
            <person name="Ussery D."/>
            <person name="Barrell B.G."/>
            <person name="Nurse P."/>
        </authorList>
    </citation>
    <scope>NUCLEOTIDE SEQUENCE [LARGE SCALE GENOMIC DNA]</scope>
    <source>
        <strain>972 / ATCC 24843</strain>
    </source>
</reference>
<reference key="2">
    <citation type="journal article" date="2008" name="J. Proteome Res.">
        <title>Phosphoproteome analysis of fission yeast.</title>
        <authorList>
            <person name="Wilson-Grady J.T."/>
            <person name="Villen J."/>
            <person name="Gygi S.P."/>
        </authorList>
    </citation>
    <scope>PHOSPHORYLATION [LARGE SCALE ANALYSIS] AT SER-94 AND SER-95</scope>
    <scope>IDENTIFICATION BY MASS SPECTROMETRY</scope>
</reference>
<keyword id="KW-0539">Nucleus</keyword>
<keyword id="KW-0597">Phosphoprotein</keyword>
<keyword id="KW-1185">Reference proteome</keyword>
<keyword id="KW-0677">Repeat</keyword>
<keyword id="KW-0690">Ribosome biogenesis</keyword>
<keyword id="KW-0694">RNA-binding</keyword>
<keyword id="KW-0698">rRNA processing</keyword>